<comment type="function">
    <text>May help in the organization of the PsaE and PsaF subunits.</text>
</comment>
<comment type="subcellular location">
    <subcellularLocation>
        <location evidence="1">Plastid</location>
        <location evidence="1">Chloroplast thylakoid membrane</location>
        <topology evidence="1">Single-pass membrane protein</topology>
    </subcellularLocation>
</comment>
<comment type="similarity">
    <text evidence="3">Belongs to the PsaJ family.</text>
</comment>
<gene>
    <name type="primary">psaJ</name>
</gene>
<sequence>MRDLKTYLXVAPV</sequence>
<dbReference type="PIR" id="S09733">
    <property type="entry name" value="S09733"/>
</dbReference>
<dbReference type="GO" id="GO:0009535">
    <property type="term" value="C:chloroplast thylakoid membrane"/>
    <property type="evidence" value="ECO:0007669"/>
    <property type="project" value="UniProtKB-SubCell"/>
</dbReference>
<dbReference type="GO" id="GO:0009522">
    <property type="term" value="C:photosystem I"/>
    <property type="evidence" value="ECO:0007669"/>
    <property type="project" value="UniProtKB-KW"/>
</dbReference>
<dbReference type="GO" id="GO:0015979">
    <property type="term" value="P:photosynthesis"/>
    <property type="evidence" value="ECO:0007669"/>
    <property type="project" value="UniProtKB-KW"/>
</dbReference>
<organism>
    <name type="scientific">Pisum sativum</name>
    <name type="common">Garden pea</name>
    <name type="synonym">Lathyrus oleraceus</name>
    <dbReference type="NCBI Taxonomy" id="3888"/>
    <lineage>
        <taxon>Eukaryota</taxon>
        <taxon>Viridiplantae</taxon>
        <taxon>Streptophyta</taxon>
        <taxon>Embryophyta</taxon>
        <taxon>Tracheophyta</taxon>
        <taxon>Spermatophyta</taxon>
        <taxon>Magnoliopsida</taxon>
        <taxon>eudicotyledons</taxon>
        <taxon>Gunneridae</taxon>
        <taxon>Pentapetalae</taxon>
        <taxon>rosids</taxon>
        <taxon>fabids</taxon>
        <taxon>Fabales</taxon>
        <taxon>Fabaceae</taxon>
        <taxon>Papilionoideae</taxon>
        <taxon>50 kb inversion clade</taxon>
        <taxon>NPAAA clade</taxon>
        <taxon>Hologalegina</taxon>
        <taxon>IRL clade</taxon>
        <taxon>Fabeae</taxon>
        <taxon>Pisum</taxon>
    </lineage>
</organism>
<protein>
    <recommendedName>
        <fullName>Photosystem I reaction center subunit IX</fullName>
    </recommendedName>
    <alternativeName>
        <fullName>PSI-J</fullName>
    </alternativeName>
</protein>
<keyword id="KW-0150">Chloroplast</keyword>
<keyword id="KW-0903">Direct protein sequencing</keyword>
<keyword id="KW-0472">Membrane</keyword>
<keyword id="KW-0602">Photosynthesis</keyword>
<keyword id="KW-0603">Photosystem I</keyword>
<keyword id="KW-0934">Plastid</keyword>
<keyword id="KW-0793">Thylakoid</keyword>
<keyword id="KW-0812">Transmembrane</keyword>
<keyword id="KW-1133">Transmembrane helix</keyword>
<accession>P17229</accession>
<feature type="chain" id="PRO_0000207805" description="Photosystem I reaction center subunit IX">
    <location>
        <begin position="1"/>
        <end position="13" status="greater than"/>
    </location>
</feature>
<feature type="transmembrane region" description="Helical" evidence="2">
    <location>
        <begin position="7"/>
        <end position="13" status="greater than"/>
    </location>
</feature>
<feature type="non-terminal residue">
    <location>
        <position position="13"/>
    </location>
</feature>
<proteinExistence type="evidence at protein level"/>
<geneLocation type="chloroplast"/>
<evidence type="ECO:0000250" key="1"/>
<evidence type="ECO:0000255" key="2"/>
<evidence type="ECO:0000305" key="3"/>
<reference key="1">
    <citation type="journal article" date="1990" name="FEBS Lett.">
        <title>Polypeptide composition of higher plant photosystem I complex. Identification of psaI, psaJ and psaK gene products.</title>
        <authorList>
            <person name="Ikeuchi M."/>
            <person name="Hirano A."/>
            <person name="Hiyama T."/>
            <person name="Inoue Y."/>
        </authorList>
    </citation>
    <scope>PROTEIN SEQUENCE</scope>
</reference>
<name>PSAJ_PEA</name>